<feature type="chain" id="PRO_1000047185" description="2,3,4,5-tetrahydropyridine-2,6-dicarboxylate N-succinyltransferase">
    <location>
        <begin position="1"/>
        <end position="274"/>
    </location>
</feature>
<feature type="binding site" evidence="1">
    <location>
        <position position="104"/>
    </location>
    <ligand>
        <name>substrate</name>
    </ligand>
</feature>
<feature type="binding site" evidence="1">
    <location>
        <position position="141"/>
    </location>
    <ligand>
        <name>substrate</name>
    </ligand>
</feature>
<reference key="1">
    <citation type="submission" date="2007-03" db="EMBL/GenBank/DDBJ databases">
        <title>Complete sequence of Shewanella loihica PV-4.</title>
        <authorList>
            <consortium name="US DOE Joint Genome Institute"/>
            <person name="Copeland A."/>
            <person name="Lucas S."/>
            <person name="Lapidus A."/>
            <person name="Barry K."/>
            <person name="Detter J.C."/>
            <person name="Glavina del Rio T."/>
            <person name="Hammon N."/>
            <person name="Israni S."/>
            <person name="Dalin E."/>
            <person name="Tice H."/>
            <person name="Pitluck S."/>
            <person name="Chain P."/>
            <person name="Malfatti S."/>
            <person name="Shin M."/>
            <person name="Vergez L."/>
            <person name="Schmutz J."/>
            <person name="Larimer F."/>
            <person name="Land M."/>
            <person name="Hauser L."/>
            <person name="Kyrpides N."/>
            <person name="Mikhailova N."/>
            <person name="Romine M.F."/>
            <person name="Serres G."/>
            <person name="Fredrickson J."/>
            <person name="Tiedje J."/>
            <person name="Richardson P."/>
        </authorList>
    </citation>
    <scope>NUCLEOTIDE SEQUENCE [LARGE SCALE GENOMIC DNA]</scope>
    <source>
        <strain>ATCC BAA-1088 / PV-4</strain>
    </source>
</reference>
<proteinExistence type="inferred from homology"/>
<accession>A3QGA6</accession>
<name>DAPD_SHELP</name>
<gene>
    <name evidence="1" type="primary">dapD</name>
    <name type="ordered locus">Shew_2638</name>
</gene>
<dbReference type="EC" id="2.3.1.117" evidence="1"/>
<dbReference type="EMBL" id="CP000606">
    <property type="protein sequence ID" value="ABO24504.1"/>
    <property type="molecule type" value="Genomic_DNA"/>
</dbReference>
<dbReference type="RefSeq" id="WP_011866435.1">
    <property type="nucleotide sequence ID" value="NC_009092.1"/>
</dbReference>
<dbReference type="SMR" id="A3QGA6"/>
<dbReference type="STRING" id="323850.Shew_2638"/>
<dbReference type="KEGG" id="slo:Shew_2638"/>
<dbReference type="eggNOG" id="COG2171">
    <property type="taxonomic scope" value="Bacteria"/>
</dbReference>
<dbReference type="HOGENOM" id="CLU_050859_0_1_6"/>
<dbReference type="OrthoDB" id="9775362at2"/>
<dbReference type="UniPathway" id="UPA00034">
    <property type="reaction ID" value="UER00019"/>
</dbReference>
<dbReference type="Proteomes" id="UP000001558">
    <property type="component" value="Chromosome"/>
</dbReference>
<dbReference type="GO" id="GO:0005737">
    <property type="term" value="C:cytoplasm"/>
    <property type="evidence" value="ECO:0007669"/>
    <property type="project" value="UniProtKB-SubCell"/>
</dbReference>
<dbReference type="GO" id="GO:0008666">
    <property type="term" value="F:2,3,4,5-tetrahydropyridine-2,6-dicarboxylate N-succinyltransferase activity"/>
    <property type="evidence" value="ECO:0007669"/>
    <property type="project" value="UniProtKB-UniRule"/>
</dbReference>
<dbReference type="GO" id="GO:0016779">
    <property type="term" value="F:nucleotidyltransferase activity"/>
    <property type="evidence" value="ECO:0007669"/>
    <property type="project" value="TreeGrafter"/>
</dbReference>
<dbReference type="GO" id="GO:0019877">
    <property type="term" value="P:diaminopimelate biosynthetic process"/>
    <property type="evidence" value="ECO:0007669"/>
    <property type="project" value="UniProtKB-UniRule"/>
</dbReference>
<dbReference type="GO" id="GO:0009089">
    <property type="term" value="P:lysine biosynthetic process via diaminopimelate"/>
    <property type="evidence" value="ECO:0007669"/>
    <property type="project" value="UniProtKB-UniRule"/>
</dbReference>
<dbReference type="CDD" id="cd03350">
    <property type="entry name" value="LbH_THP_succinylT"/>
    <property type="match status" value="1"/>
</dbReference>
<dbReference type="Gene3D" id="2.160.10.10">
    <property type="entry name" value="Hexapeptide repeat proteins"/>
    <property type="match status" value="1"/>
</dbReference>
<dbReference type="Gene3D" id="1.10.166.10">
    <property type="entry name" value="Tetrahydrodipicolinate-N-succinyltransferase, N-terminal domain"/>
    <property type="match status" value="1"/>
</dbReference>
<dbReference type="HAMAP" id="MF_00811">
    <property type="entry name" value="DapD"/>
    <property type="match status" value="1"/>
</dbReference>
<dbReference type="InterPro" id="IPR005664">
    <property type="entry name" value="DapD_Trfase_Hexpep_rpt_fam"/>
</dbReference>
<dbReference type="InterPro" id="IPR001451">
    <property type="entry name" value="Hexapep"/>
</dbReference>
<dbReference type="InterPro" id="IPR018357">
    <property type="entry name" value="Hexapep_transf_CS"/>
</dbReference>
<dbReference type="InterPro" id="IPR023180">
    <property type="entry name" value="THP_succinylTrfase_dom1"/>
</dbReference>
<dbReference type="InterPro" id="IPR037133">
    <property type="entry name" value="THP_succinylTrfase_N_sf"/>
</dbReference>
<dbReference type="InterPro" id="IPR011004">
    <property type="entry name" value="Trimer_LpxA-like_sf"/>
</dbReference>
<dbReference type="NCBIfam" id="TIGR00965">
    <property type="entry name" value="dapD"/>
    <property type="match status" value="1"/>
</dbReference>
<dbReference type="NCBIfam" id="NF008808">
    <property type="entry name" value="PRK11830.1"/>
    <property type="match status" value="1"/>
</dbReference>
<dbReference type="PANTHER" id="PTHR19136:SF52">
    <property type="entry name" value="2,3,4,5-TETRAHYDROPYRIDINE-2,6-DICARBOXYLATE N-SUCCINYLTRANSFERASE"/>
    <property type="match status" value="1"/>
</dbReference>
<dbReference type="PANTHER" id="PTHR19136">
    <property type="entry name" value="MOLYBDENUM COFACTOR GUANYLYLTRANSFERASE"/>
    <property type="match status" value="1"/>
</dbReference>
<dbReference type="Pfam" id="PF14602">
    <property type="entry name" value="Hexapep_2"/>
    <property type="match status" value="1"/>
</dbReference>
<dbReference type="Pfam" id="PF14805">
    <property type="entry name" value="THDPS_N_2"/>
    <property type="match status" value="1"/>
</dbReference>
<dbReference type="SUPFAM" id="SSF51161">
    <property type="entry name" value="Trimeric LpxA-like enzymes"/>
    <property type="match status" value="1"/>
</dbReference>
<dbReference type="PROSITE" id="PS00101">
    <property type="entry name" value="HEXAPEP_TRANSFERASES"/>
    <property type="match status" value="1"/>
</dbReference>
<comment type="catalytic activity">
    <reaction evidence="1">
        <text>(S)-2,3,4,5-tetrahydrodipicolinate + succinyl-CoA + H2O = (S)-2-succinylamino-6-oxoheptanedioate + CoA</text>
        <dbReference type="Rhea" id="RHEA:17325"/>
        <dbReference type="ChEBI" id="CHEBI:15377"/>
        <dbReference type="ChEBI" id="CHEBI:15685"/>
        <dbReference type="ChEBI" id="CHEBI:16845"/>
        <dbReference type="ChEBI" id="CHEBI:57287"/>
        <dbReference type="ChEBI" id="CHEBI:57292"/>
        <dbReference type="EC" id="2.3.1.117"/>
    </reaction>
</comment>
<comment type="pathway">
    <text evidence="1">Amino-acid biosynthesis; L-lysine biosynthesis via DAP pathway; LL-2,6-diaminopimelate from (S)-tetrahydrodipicolinate (succinylase route): step 1/3.</text>
</comment>
<comment type="subunit">
    <text evidence="1">Homotrimer.</text>
</comment>
<comment type="subcellular location">
    <subcellularLocation>
        <location evidence="1">Cytoplasm</location>
    </subcellularLocation>
</comment>
<comment type="similarity">
    <text evidence="1">Belongs to the transferase hexapeptide repeat family.</text>
</comment>
<organism>
    <name type="scientific">Shewanella loihica (strain ATCC BAA-1088 / PV-4)</name>
    <dbReference type="NCBI Taxonomy" id="323850"/>
    <lineage>
        <taxon>Bacteria</taxon>
        <taxon>Pseudomonadati</taxon>
        <taxon>Pseudomonadota</taxon>
        <taxon>Gammaproteobacteria</taxon>
        <taxon>Alteromonadales</taxon>
        <taxon>Shewanellaceae</taxon>
        <taxon>Shewanella</taxon>
    </lineage>
</organism>
<evidence type="ECO:0000255" key="1">
    <source>
        <dbReference type="HAMAP-Rule" id="MF_00811"/>
    </source>
</evidence>
<protein>
    <recommendedName>
        <fullName evidence="1">2,3,4,5-tetrahydropyridine-2,6-dicarboxylate N-succinyltransferase</fullName>
        <ecNumber evidence="1">2.3.1.117</ecNumber>
    </recommendedName>
    <alternativeName>
        <fullName evidence="1">Tetrahydrodipicolinate N-succinyltransferase</fullName>
        <shortName evidence="1">THDP succinyltransferase</shortName>
        <shortName evidence="1">THP succinyltransferase</shortName>
        <shortName evidence="1">Tetrahydropicolinate succinylase</shortName>
    </alternativeName>
</protein>
<keyword id="KW-0012">Acyltransferase</keyword>
<keyword id="KW-0028">Amino-acid biosynthesis</keyword>
<keyword id="KW-0963">Cytoplasm</keyword>
<keyword id="KW-0220">Diaminopimelate biosynthesis</keyword>
<keyword id="KW-0457">Lysine biosynthesis</keyword>
<keyword id="KW-1185">Reference proteome</keyword>
<keyword id="KW-0677">Repeat</keyword>
<keyword id="KW-0808">Transferase</keyword>
<sequence length="274" mass="29779">MEALRQRIETAFEARAEITPTTVEPSVRADVEKAIAMLDTGEARVAEKIDGQWNVHQWLKKAVLLSFRIFDNQVIDGAETKFFDKVPMKFADYDEARFKQEAIRVVPPAAVRKGSFIGKNTVLMPSYVNLGAYVDEGTMVDTWATVGSCAQIGKNVHLSGGVGIGGVLEPLQAGPTIIEDNCFIGARSEIVEGVVVEEGSVISMGVYIGQSTRIYDRETGEIHYGRVPAGSVVVSGTLPSQCGKYNLYAAIIVKKVDAKTRGKVGINELLRIVD</sequence>